<feature type="chain" id="PRO_1000198993" description="Aspartate--tRNA(Asp/Asn) ligase">
    <location>
        <begin position="1"/>
        <end position="590"/>
    </location>
</feature>
<feature type="region of interest" description="Aspartate" evidence="1">
    <location>
        <begin position="206"/>
        <end position="209"/>
    </location>
</feature>
<feature type="binding site" evidence="1">
    <location>
        <position position="182"/>
    </location>
    <ligand>
        <name>L-aspartate</name>
        <dbReference type="ChEBI" id="CHEBI:29991"/>
    </ligand>
</feature>
<feature type="binding site" evidence="1">
    <location>
        <begin position="228"/>
        <end position="230"/>
    </location>
    <ligand>
        <name>ATP</name>
        <dbReference type="ChEBI" id="CHEBI:30616"/>
    </ligand>
</feature>
<feature type="binding site" evidence="1">
    <location>
        <position position="228"/>
    </location>
    <ligand>
        <name>L-aspartate</name>
        <dbReference type="ChEBI" id="CHEBI:29991"/>
    </ligand>
</feature>
<feature type="binding site" evidence="1">
    <location>
        <position position="237"/>
    </location>
    <ligand>
        <name>ATP</name>
        <dbReference type="ChEBI" id="CHEBI:30616"/>
    </ligand>
</feature>
<feature type="binding site" evidence="1">
    <location>
        <position position="454"/>
    </location>
    <ligand>
        <name>L-aspartate</name>
        <dbReference type="ChEBI" id="CHEBI:29991"/>
    </ligand>
</feature>
<feature type="binding site" evidence="1">
    <location>
        <position position="488"/>
    </location>
    <ligand>
        <name>ATP</name>
        <dbReference type="ChEBI" id="CHEBI:30616"/>
    </ligand>
</feature>
<feature type="binding site" evidence="1">
    <location>
        <position position="495"/>
    </location>
    <ligand>
        <name>L-aspartate</name>
        <dbReference type="ChEBI" id="CHEBI:29991"/>
    </ligand>
</feature>
<feature type="binding site" evidence="1">
    <location>
        <begin position="540"/>
        <end position="543"/>
    </location>
    <ligand>
        <name>ATP</name>
        <dbReference type="ChEBI" id="CHEBI:30616"/>
    </ligand>
</feature>
<feature type="site" description="Important for tRNA non-discrimination" evidence="1">
    <location>
        <position position="38"/>
    </location>
</feature>
<feature type="site" description="Important for tRNA non-discrimination" evidence="1">
    <location>
        <position position="90"/>
    </location>
</feature>
<sequence length="590" mass="66815">MAESINGLKRTHYAGKISTQQIGKKVTVMGWVQKRRDHGGVIFIDLRDRSGIVQVVFNPDNNERAFKKATELRSEYVIAVEGEVEKRPEGNINPDIPTGEIEIRGNRLRILDESETPPFEIDDDINVGEDLRLKYRYLDLRRPRMKKNLELRHRVMKTTRDYLDDNGFWEVETPILTRSTPEGARDYLVPSRIHPGHFYALPQSPQLFKQLLMVGGVERYFQIARCFRDEDLRANRQPEFTQIDIEMSFIDKEDVFSLVNGLMKRLFALVDIEIPEKIPVMPYQEAIDRFGSDKPDLRFGMELKDVSDVVKDSEFRVFSGVVKDGGQVKGINFKGGAISPRSKIDGYTDYVKIFGAKGLAWIALKENGLKSPIAKFLSEKELEGIKEKMGAQTGDLLLFVADKPSIVADALGNLRLKIAREEGLIPDGVYKFVWVVDFPLMEYDEDEGRYVAKHHPFTAPLDEDIPLLDSNPEKIRSKAYDFVLNGEELGGGSIRINNKDLQMKVFNALNISEEKASDKFGFLLEAFNYGAPPHGGIAFGLDRLLMVLSGSESMRDVIAFPKTQKASSPLTEAPSTVAEKQLRELHIKID</sequence>
<gene>
    <name evidence="1" type="primary">aspS</name>
    <name type="ordered locus">Hore_12140</name>
</gene>
<proteinExistence type="inferred from homology"/>
<protein>
    <recommendedName>
        <fullName evidence="1">Aspartate--tRNA(Asp/Asn) ligase</fullName>
        <ecNumber evidence="1">6.1.1.23</ecNumber>
    </recommendedName>
    <alternativeName>
        <fullName evidence="1">Aspartyl-tRNA synthetase</fullName>
        <shortName evidence="1">AspRS</shortName>
    </alternativeName>
    <alternativeName>
        <fullName evidence="1">Non-discriminating aspartyl-tRNA synthetase</fullName>
        <shortName evidence="1">ND-AspRS</shortName>
    </alternativeName>
</protein>
<reference key="1">
    <citation type="journal article" date="2009" name="PLoS ONE">
        <title>Genome analysis of the anaerobic thermohalophilic bacterium Halothermothrix orenii.</title>
        <authorList>
            <person name="Mavromatis K."/>
            <person name="Ivanova N."/>
            <person name="Anderson I."/>
            <person name="Lykidis A."/>
            <person name="Hooper S.D."/>
            <person name="Sun H."/>
            <person name="Kunin V."/>
            <person name="Lapidus A."/>
            <person name="Hugenholtz P."/>
            <person name="Patel B."/>
            <person name="Kyrpides N.C."/>
        </authorList>
    </citation>
    <scope>NUCLEOTIDE SEQUENCE [LARGE SCALE GENOMIC DNA]</scope>
    <source>
        <strain>H 168 / OCM 544 / DSM 9562</strain>
    </source>
</reference>
<accession>B8CXE5</accession>
<comment type="function">
    <text evidence="1">Aspartyl-tRNA synthetase with relaxed tRNA specificity since it is able to aspartylate not only its cognate tRNA(Asp) but also tRNA(Asn). Reaction proceeds in two steps: L-aspartate is first activated by ATP to form Asp-AMP and then transferred to the acceptor end of tRNA(Asp/Asn).</text>
</comment>
<comment type="catalytic activity">
    <reaction evidence="1">
        <text>tRNA(Asx) + L-aspartate + ATP = L-aspartyl-tRNA(Asx) + AMP + diphosphate</text>
        <dbReference type="Rhea" id="RHEA:18349"/>
        <dbReference type="Rhea" id="RHEA-COMP:9710"/>
        <dbReference type="Rhea" id="RHEA-COMP:9711"/>
        <dbReference type="ChEBI" id="CHEBI:29991"/>
        <dbReference type="ChEBI" id="CHEBI:30616"/>
        <dbReference type="ChEBI" id="CHEBI:33019"/>
        <dbReference type="ChEBI" id="CHEBI:78442"/>
        <dbReference type="ChEBI" id="CHEBI:78516"/>
        <dbReference type="ChEBI" id="CHEBI:456215"/>
        <dbReference type="EC" id="6.1.1.23"/>
    </reaction>
</comment>
<comment type="subunit">
    <text evidence="1">Homodimer.</text>
</comment>
<comment type="subcellular location">
    <subcellularLocation>
        <location evidence="1">Cytoplasm</location>
    </subcellularLocation>
</comment>
<comment type="similarity">
    <text evidence="1">Belongs to the class-II aminoacyl-tRNA synthetase family. Type 1 subfamily.</text>
</comment>
<dbReference type="EC" id="6.1.1.23" evidence="1"/>
<dbReference type="EMBL" id="CP001098">
    <property type="protein sequence ID" value="ACL69964.1"/>
    <property type="molecule type" value="Genomic_DNA"/>
</dbReference>
<dbReference type="RefSeq" id="WP_012636148.1">
    <property type="nucleotide sequence ID" value="NC_011899.1"/>
</dbReference>
<dbReference type="SMR" id="B8CXE5"/>
<dbReference type="STRING" id="373903.Hore_12140"/>
<dbReference type="KEGG" id="hor:Hore_12140"/>
<dbReference type="eggNOG" id="COG0173">
    <property type="taxonomic scope" value="Bacteria"/>
</dbReference>
<dbReference type="HOGENOM" id="CLU_014330_3_2_9"/>
<dbReference type="OrthoDB" id="9802326at2"/>
<dbReference type="Proteomes" id="UP000000719">
    <property type="component" value="Chromosome"/>
</dbReference>
<dbReference type="GO" id="GO:0005737">
    <property type="term" value="C:cytoplasm"/>
    <property type="evidence" value="ECO:0007669"/>
    <property type="project" value="UniProtKB-SubCell"/>
</dbReference>
<dbReference type="GO" id="GO:0004815">
    <property type="term" value="F:aspartate-tRNA ligase activity"/>
    <property type="evidence" value="ECO:0007669"/>
    <property type="project" value="UniProtKB-UniRule"/>
</dbReference>
<dbReference type="GO" id="GO:0050560">
    <property type="term" value="F:aspartate-tRNA(Asn) ligase activity"/>
    <property type="evidence" value="ECO:0007669"/>
    <property type="project" value="UniProtKB-EC"/>
</dbReference>
<dbReference type="GO" id="GO:0005524">
    <property type="term" value="F:ATP binding"/>
    <property type="evidence" value="ECO:0007669"/>
    <property type="project" value="UniProtKB-UniRule"/>
</dbReference>
<dbReference type="GO" id="GO:0140096">
    <property type="term" value="F:catalytic activity, acting on a protein"/>
    <property type="evidence" value="ECO:0007669"/>
    <property type="project" value="UniProtKB-ARBA"/>
</dbReference>
<dbReference type="GO" id="GO:0003676">
    <property type="term" value="F:nucleic acid binding"/>
    <property type="evidence" value="ECO:0007669"/>
    <property type="project" value="InterPro"/>
</dbReference>
<dbReference type="GO" id="GO:0016740">
    <property type="term" value="F:transferase activity"/>
    <property type="evidence" value="ECO:0007669"/>
    <property type="project" value="UniProtKB-ARBA"/>
</dbReference>
<dbReference type="GO" id="GO:0006422">
    <property type="term" value="P:aspartyl-tRNA aminoacylation"/>
    <property type="evidence" value="ECO:0007669"/>
    <property type="project" value="UniProtKB-UniRule"/>
</dbReference>
<dbReference type="CDD" id="cd00777">
    <property type="entry name" value="AspRS_core"/>
    <property type="match status" value="1"/>
</dbReference>
<dbReference type="CDD" id="cd04317">
    <property type="entry name" value="EcAspRS_like_N"/>
    <property type="match status" value="1"/>
</dbReference>
<dbReference type="Gene3D" id="3.30.930.10">
    <property type="entry name" value="Bira Bifunctional Protein, Domain 2"/>
    <property type="match status" value="1"/>
</dbReference>
<dbReference type="Gene3D" id="3.30.1360.30">
    <property type="entry name" value="GAD-like domain"/>
    <property type="match status" value="1"/>
</dbReference>
<dbReference type="Gene3D" id="2.40.50.140">
    <property type="entry name" value="Nucleic acid-binding proteins"/>
    <property type="match status" value="1"/>
</dbReference>
<dbReference type="HAMAP" id="MF_00044">
    <property type="entry name" value="Asp_tRNA_synth_type1"/>
    <property type="match status" value="1"/>
</dbReference>
<dbReference type="InterPro" id="IPR004364">
    <property type="entry name" value="Aa-tRNA-synt_II"/>
</dbReference>
<dbReference type="InterPro" id="IPR006195">
    <property type="entry name" value="aa-tRNA-synth_II"/>
</dbReference>
<dbReference type="InterPro" id="IPR045864">
    <property type="entry name" value="aa-tRNA-synth_II/BPL/LPL"/>
</dbReference>
<dbReference type="InterPro" id="IPR004524">
    <property type="entry name" value="Asp-tRNA-ligase_1"/>
</dbReference>
<dbReference type="InterPro" id="IPR047089">
    <property type="entry name" value="Asp-tRNA-ligase_1_N"/>
</dbReference>
<dbReference type="InterPro" id="IPR002312">
    <property type="entry name" value="Asp/Asn-tRNA-synth_IIb"/>
</dbReference>
<dbReference type="InterPro" id="IPR047090">
    <property type="entry name" value="AspRS_core"/>
</dbReference>
<dbReference type="InterPro" id="IPR004115">
    <property type="entry name" value="GAD-like_sf"/>
</dbReference>
<dbReference type="InterPro" id="IPR029351">
    <property type="entry name" value="GAD_dom"/>
</dbReference>
<dbReference type="InterPro" id="IPR012340">
    <property type="entry name" value="NA-bd_OB-fold"/>
</dbReference>
<dbReference type="InterPro" id="IPR004365">
    <property type="entry name" value="NA-bd_OB_tRNA"/>
</dbReference>
<dbReference type="NCBIfam" id="TIGR00459">
    <property type="entry name" value="aspS_bact"/>
    <property type="match status" value="1"/>
</dbReference>
<dbReference type="NCBIfam" id="NF001750">
    <property type="entry name" value="PRK00476.1"/>
    <property type="match status" value="1"/>
</dbReference>
<dbReference type="PANTHER" id="PTHR22594:SF5">
    <property type="entry name" value="ASPARTATE--TRNA LIGASE, MITOCHONDRIAL"/>
    <property type="match status" value="1"/>
</dbReference>
<dbReference type="PANTHER" id="PTHR22594">
    <property type="entry name" value="ASPARTYL/LYSYL-TRNA SYNTHETASE"/>
    <property type="match status" value="1"/>
</dbReference>
<dbReference type="Pfam" id="PF02938">
    <property type="entry name" value="GAD"/>
    <property type="match status" value="1"/>
</dbReference>
<dbReference type="Pfam" id="PF00152">
    <property type="entry name" value="tRNA-synt_2"/>
    <property type="match status" value="1"/>
</dbReference>
<dbReference type="Pfam" id="PF01336">
    <property type="entry name" value="tRNA_anti-codon"/>
    <property type="match status" value="1"/>
</dbReference>
<dbReference type="PRINTS" id="PR01042">
    <property type="entry name" value="TRNASYNTHASP"/>
</dbReference>
<dbReference type="SUPFAM" id="SSF55681">
    <property type="entry name" value="Class II aaRS and biotin synthetases"/>
    <property type="match status" value="1"/>
</dbReference>
<dbReference type="SUPFAM" id="SSF55261">
    <property type="entry name" value="GAD domain-like"/>
    <property type="match status" value="1"/>
</dbReference>
<dbReference type="SUPFAM" id="SSF50249">
    <property type="entry name" value="Nucleic acid-binding proteins"/>
    <property type="match status" value="1"/>
</dbReference>
<dbReference type="PROSITE" id="PS50862">
    <property type="entry name" value="AA_TRNA_LIGASE_II"/>
    <property type="match status" value="1"/>
</dbReference>
<organism>
    <name type="scientific">Halothermothrix orenii (strain H 168 / OCM 544 / DSM 9562)</name>
    <dbReference type="NCBI Taxonomy" id="373903"/>
    <lineage>
        <taxon>Bacteria</taxon>
        <taxon>Bacillati</taxon>
        <taxon>Bacillota</taxon>
        <taxon>Clostridia</taxon>
        <taxon>Halanaerobiales</taxon>
        <taxon>Halothermotrichaceae</taxon>
        <taxon>Halothermothrix</taxon>
    </lineage>
</organism>
<evidence type="ECO:0000255" key="1">
    <source>
        <dbReference type="HAMAP-Rule" id="MF_00044"/>
    </source>
</evidence>
<keyword id="KW-0030">Aminoacyl-tRNA synthetase</keyword>
<keyword id="KW-0067">ATP-binding</keyword>
<keyword id="KW-0963">Cytoplasm</keyword>
<keyword id="KW-0436">Ligase</keyword>
<keyword id="KW-0547">Nucleotide-binding</keyword>
<keyword id="KW-0648">Protein biosynthesis</keyword>
<keyword id="KW-1185">Reference proteome</keyword>
<name>SYDND_HALOH</name>